<feature type="chain" id="PRO_0000117619" description="NADH-ubiquinone oxidoreductase chain 2">
    <location>
        <begin position="1"/>
        <end position="347"/>
    </location>
</feature>
<feature type="transmembrane region" description="Helical" evidence="3">
    <location>
        <begin position="3"/>
        <end position="23"/>
    </location>
</feature>
<feature type="transmembrane region" description="Helical" evidence="3">
    <location>
        <begin position="25"/>
        <end position="45"/>
    </location>
</feature>
<feature type="transmembrane region" description="Helical" evidence="3">
    <location>
        <begin position="59"/>
        <end position="79"/>
    </location>
</feature>
<feature type="transmembrane region" description="Helical" evidence="3">
    <location>
        <begin position="96"/>
        <end position="116"/>
    </location>
</feature>
<feature type="transmembrane region" description="Helical" evidence="3">
    <location>
        <begin position="122"/>
        <end position="142"/>
    </location>
</feature>
<feature type="transmembrane region" description="Helical" evidence="3">
    <location>
        <begin position="153"/>
        <end position="173"/>
    </location>
</feature>
<feature type="transmembrane region" description="Helical" evidence="3">
    <location>
        <begin position="178"/>
        <end position="198"/>
    </location>
</feature>
<feature type="transmembrane region" description="Helical" evidence="3">
    <location>
        <begin position="200"/>
        <end position="220"/>
    </location>
</feature>
<feature type="transmembrane region" description="Helical" evidence="3">
    <location>
        <begin position="237"/>
        <end position="257"/>
    </location>
</feature>
<feature type="transmembrane region" description="Helical" evidence="3">
    <location>
        <begin position="274"/>
        <end position="294"/>
    </location>
</feature>
<feature type="transmembrane region" description="Helical" evidence="3">
    <location>
        <begin position="325"/>
        <end position="345"/>
    </location>
</feature>
<keyword id="KW-0249">Electron transport</keyword>
<keyword id="KW-0472">Membrane</keyword>
<keyword id="KW-0496">Mitochondrion</keyword>
<keyword id="KW-0999">Mitochondrion inner membrane</keyword>
<keyword id="KW-0520">NAD</keyword>
<keyword id="KW-0679">Respiratory chain</keyword>
<keyword id="KW-1278">Translocase</keyword>
<keyword id="KW-0812">Transmembrane</keyword>
<keyword id="KW-1133">Transmembrane helix</keyword>
<keyword id="KW-0813">Transport</keyword>
<keyword id="KW-0830">Ubiquinone</keyword>
<evidence type="ECO:0000250" key="1">
    <source>
        <dbReference type="UniProtKB" id="P03891"/>
    </source>
</evidence>
<evidence type="ECO:0000250" key="2">
    <source>
        <dbReference type="UniProtKB" id="P03892"/>
    </source>
</evidence>
<evidence type="ECO:0000255" key="3"/>
<evidence type="ECO:0000305" key="4"/>
<geneLocation type="mitochondrion"/>
<comment type="function">
    <text evidence="1">Core subunit of the mitochondrial membrane respiratory chain NADH dehydrogenase (Complex I) which catalyzes electron transfer from NADH through the respiratory chain, using ubiquinone as an electron acceptor. Essential for the catalytic activity and assembly of complex I.</text>
</comment>
<comment type="catalytic activity">
    <reaction evidence="1">
        <text>a ubiquinone + NADH + 5 H(+)(in) = a ubiquinol + NAD(+) + 4 H(+)(out)</text>
        <dbReference type="Rhea" id="RHEA:29091"/>
        <dbReference type="Rhea" id="RHEA-COMP:9565"/>
        <dbReference type="Rhea" id="RHEA-COMP:9566"/>
        <dbReference type="ChEBI" id="CHEBI:15378"/>
        <dbReference type="ChEBI" id="CHEBI:16389"/>
        <dbReference type="ChEBI" id="CHEBI:17976"/>
        <dbReference type="ChEBI" id="CHEBI:57540"/>
        <dbReference type="ChEBI" id="CHEBI:57945"/>
        <dbReference type="EC" id="7.1.1.2"/>
    </reaction>
</comment>
<comment type="subunit">
    <text evidence="1 2">Core subunit of respiratory chain NADH dehydrogenase (Complex I) which is composed of 45 different subunits. Interacts with TMEM242 (By similarity).</text>
</comment>
<comment type="subcellular location">
    <subcellularLocation>
        <location evidence="2">Mitochondrion inner membrane</location>
        <topology evidence="3">Multi-pass membrane protein</topology>
    </subcellularLocation>
</comment>
<comment type="similarity">
    <text evidence="4">Belongs to the complex I subunit 2 family.</text>
</comment>
<name>NU2M_PARHE</name>
<sequence>MKPPILIIIMSTVISGTMIVLTSSHWMLTWIGFEMNMLAVIPILMKKFNPRAMEASTKYFLMQATASMLLMMGITINLLHTGQWTILNNLNPTASTLMTIALAMKLGLAPFHFWVPEVTQGISLSSGMILLTWQKIAPLSVLYQISPNINPKLLLLMAILSVLIGGWGGLNQTQLRKILAYSSIAHMGWMSTILIYNPTMMLLNLIIYIMMTLSTFMLFMHNSTTTTLALSQTWNKMPLITSLILMLMLSLGGLPPLSGFIPKWMIIQELTKNEMIIMPTFLAITALLNLYFYMRLTYATALTMFPSTNNMKMKWQFENTKKTMFLPPLIVMSTMLIPLTPIISILE</sequence>
<gene>
    <name evidence="1" type="primary">MT-ND2</name>
    <name type="synonym">MTND2</name>
    <name type="synonym">NADH2</name>
    <name type="synonym">ND2</name>
</gene>
<proteinExistence type="inferred from homology"/>
<reference key="1">
    <citation type="journal article" date="2003" name="Nature">
        <title>Single origin of Malagasy Carnivora from an African ancestor.</title>
        <authorList>
            <person name="Yoder A.D."/>
            <person name="Burns M.M."/>
            <person name="Zehr S."/>
            <person name="Delefosse T."/>
            <person name="Veron G."/>
            <person name="Goodman S.M."/>
            <person name="Flynn J.J."/>
        </authorList>
    </citation>
    <scope>NUCLEOTIDE SEQUENCE [GENOMIC DNA]</scope>
</reference>
<dbReference type="EC" id="7.1.1.2" evidence="1"/>
<dbReference type="EMBL" id="AY170056">
    <property type="protein sequence ID" value="AAN84590.1"/>
    <property type="molecule type" value="Genomic_DNA"/>
</dbReference>
<dbReference type="SMR" id="Q85PQ0"/>
<dbReference type="GO" id="GO:0005743">
    <property type="term" value="C:mitochondrial inner membrane"/>
    <property type="evidence" value="ECO:0000250"/>
    <property type="project" value="UniProtKB"/>
</dbReference>
<dbReference type="GO" id="GO:0008137">
    <property type="term" value="F:NADH dehydrogenase (ubiquinone) activity"/>
    <property type="evidence" value="ECO:0000250"/>
    <property type="project" value="UniProtKB"/>
</dbReference>
<dbReference type="GO" id="GO:0006120">
    <property type="term" value="P:mitochondrial electron transport, NADH to ubiquinone"/>
    <property type="evidence" value="ECO:0000250"/>
    <property type="project" value="UniProtKB"/>
</dbReference>
<dbReference type="GO" id="GO:0032981">
    <property type="term" value="P:mitochondrial respiratory chain complex I assembly"/>
    <property type="evidence" value="ECO:0000250"/>
    <property type="project" value="UniProtKB"/>
</dbReference>
<dbReference type="InterPro" id="IPR050175">
    <property type="entry name" value="Complex_I_Subunit_2"/>
</dbReference>
<dbReference type="InterPro" id="IPR010933">
    <property type="entry name" value="NADH_DH_su2_C"/>
</dbReference>
<dbReference type="InterPro" id="IPR003917">
    <property type="entry name" value="NADH_UbQ_OxRdtase_chain2"/>
</dbReference>
<dbReference type="InterPro" id="IPR001750">
    <property type="entry name" value="ND/Mrp_TM"/>
</dbReference>
<dbReference type="PANTHER" id="PTHR46552">
    <property type="entry name" value="NADH-UBIQUINONE OXIDOREDUCTASE CHAIN 2"/>
    <property type="match status" value="1"/>
</dbReference>
<dbReference type="PANTHER" id="PTHR46552:SF1">
    <property type="entry name" value="NADH-UBIQUINONE OXIDOREDUCTASE CHAIN 2"/>
    <property type="match status" value="1"/>
</dbReference>
<dbReference type="Pfam" id="PF06444">
    <property type="entry name" value="NADH_dehy_S2_C"/>
    <property type="match status" value="1"/>
</dbReference>
<dbReference type="Pfam" id="PF00361">
    <property type="entry name" value="Proton_antipo_M"/>
    <property type="match status" value="1"/>
</dbReference>
<dbReference type="PRINTS" id="PR01436">
    <property type="entry name" value="NADHDHGNASE2"/>
</dbReference>
<accession>Q85PQ0</accession>
<organism>
    <name type="scientific">Paradoxurus hermaphroditus</name>
    <name type="common">Asian palm civet</name>
    <dbReference type="NCBI Taxonomy" id="71117"/>
    <lineage>
        <taxon>Eukaryota</taxon>
        <taxon>Metazoa</taxon>
        <taxon>Chordata</taxon>
        <taxon>Craniata</taxon>
        <taxon>Vertebrata</taxon>
        <taxon>Euteleostomi</taxon>
        <taxon>Mammalia</taxon>
        <taxon>Eutheria</taxon>
        <taxon>Laurasiatheria</taxon>
        <taxon>Carnivora</taxon>
        <taxon>Feliformia</taxon>
        <taxon>Viverridae</taxon>
        <taxon>Paradoxurinae</taxon>
        <taxon>Paradoxurus</taxon>
    </lineage>
</organism>
<protein>
    <recommendedName>
        <fullName evidence="1">NADH-ubiquinone oxidoreductase chain 2</fullName>
        <ecNumber evidence="1">7.1.1.2</ecNumber>
    </recommendedName>
    <alternativeName>
        <fullName>NADH dehydrogenase subunit 2</fullName>
    </alternativeName>
</protein>